<gene>
    <name type="primary">RBM43</name>
    <name type="synonym">C2orf38</name>
</gene>
<organism>
    <name type="scientific">Homo sapiens</name>
    <name type="common">Human</name>
    <dbReference type="NCBI Taxonomy" id="9606"/>
    <lineage>
        <taxon>Eukaryota</taxon>
        <taxon>Metazoa</taxon>
        <taxon>Chordata</taxon>
        <taxon>Craniata</taxon>
        <taxon>Vertebrata</taxon>
        <taxon>Euteleostomi</taxon>
        <taxon>Mammalia</taxon>
        <taxon>Eutheria</taxon>
        <taxon>Euarchontoglires</taxon>
        <taxon>Primates</taxon>
        <taxon>Haplorrhini</taxon>
        <taxon>Catarrhini</taxon>
        <taxon>Hominidae</taxon>
        <taxon>Homo</taxon>
    </lineage>
</organism>
<name>RBM43_HUMAN</name>
<proteinExistence type="evidence at protein level"/>
<evidence type="ECO:0000255" key="1">
    <source>
        <dbReference type="PROSITE-ProRule" id="PRU00176"/>
    </source>
</evidence>
<accession>Q6ZSC3</accession>
<accession>B2RMT5</accession>
<dbReference type="EMBL" id="AK127552">
    <property type="protein sequence ID" value="BAC87031.1"/>
    <property type="molecule type" value="mRNA"/>
</dbReference>
<dbReference type="EMBL" id="CH471058">
    <property type="protein sequence ID" value="EAX11514.1"/>
    <property type="molecule type" value="Genomic_DNA"/>
</dbReference>
<dbReference type="EMBL" id="BC136410">
    <property type="protein sequence ID" value="AAI36411.1"/>
    <property type="molecule type" value="mRNA"/>
</dbReference>
<dbReference type="EMBL" id="BC136411">
    <property type="protein sequence ID" value="AAI36412.1"/>
    <property type="molecule type" value="mRNA"/>
</dbReference>
<dbReference type="CCDS" id="CCDS2191.1"/>
<dbReference type="RefSeq" id="NP_940959.1">
    <property type="nucleotide sequence ID" value="NM_198557.3"/>
</dbReference>
<dbReference type="SMR" id="Q6ZSC3"/>
<dbReference type="BioGRID" id="131966">
    <property type="interactions" value="10"/>
</dbReference>
<dbReference type="FunCoup" id="Q6ZSC3">
    <property type="interactions" value="71"/>
</dbReference>
<dbReference type="IntAct" id="Q6ZSC3">
    <property type="interactions" value="9"/>
</dbReference>
<dbReference type="STRING" id="9606.ENSP00000331211"/>
<dbReference type="iPTMnet" id="Q6ZSC3"/>
<dbReference type="PhosphoSitePlus" id="Q6ZSC3"/>
<dbReference type="BioMuta" id="RBM43"/>
<dbReference type="DMDM" id="74711383"/>
<dbReference type="jPOST" id="Q6ZSC3"/>
<dbReference type="MassIVE" id="Q6ZSC3"/>
<dbReference type="PaxDb" id="9606-ENSP00000331211"/>
<dbReference type="PeptideAtlas" id="Q6ZSC3"/>
<dbReference type="ProteomicsDB" id="68214"/>
<dbReference type="Pumba" id="Q6ZSC3"/>
<dbReference type="Antibodypedia" id="51960">
    <property type="antibodies" value="76 antibodies from 16 providers"/>
</dbReference>
<dbReference type="DNASU" id="375287"/>
<dbReference type="Ensembl" id="ENST00000331426.6">
    <property type="protein sequence ID" value="ENSP00000331211.5"/>
    <property type="gene ID" value="ENSG00000184898.7"/>
</dbReference>
<dbReference type="GeneID" id="375287"/>
<dbReference type="KEGG" id="hsa:375287"/>
<dbReference type="MANE-Select" id="ENST00000331426.6">
    <property type="protein sequence ID" value="ENSP00000331211.5"/>
    <property type="RefSeq nucleotide sequence ID" value="NM_198557.3"/>
    <property type="RefSeq protein sequence ID" value="NP_940959.1"/>
</dbReference>
<dbReference type="UCSC" id="uc002txh.4">
    <property type="organism name" value="human"/>
</dbReference>
<dbReference type="AGR" id="HGNC:24790"/>
<dbReference type="CTD" id="375287"/>
<dbReference type="DisGeNET" id="375287"/>
<dbReference type="GeneCards" id="RBM43"/>
<dbReference type="HGNC" id="HGNC:24790">
    <property type="gene designation" value="RBM43"/>
</dbReference>
<dbReference type="HPA" id="ENSG00000184898">
    <property type="expression patterns" value="Low tissue specificity"/>
</dbReference>
<dbReference type="neXtProt" id="NX_Q6ZSC3"/>
<dbReference type="OpenTargets" id="ENSG00000184898"/>
<dbReference type="PharmGKB" id="PA162400761"/>
<dbReference type="VEuPathDB" id="HostDB:ENSG00000184898"/>
<dbReference type="eggNOG" id="KOG4012">
    <property type="taxonomic scope" value="Eukaryota"/>
</dbReference>
<dbReference type="GeneTree" id="ENSGT00530000063686"/>
<dbReference type="HOGENOM" id="CLU_067477_0_0_1"/>
<dbReference type="InParanoid" id="Q6ZSC3"/>
<dbReference type="OMA" id="FYETHID"/>
<dbReference type="OrthoDB" id="9948435at2759"/>
<dbReference type="PAN-GO" id="Q6ZSC3">
    <property type="GO annotations" value="0 GO annotations based on evolutionary models"/>
</dbReference>
<dbReference type="PhylomeDB" id="Q6ZSC3"/>
<dbReference type="TreeFam" id="TF335737"/>
<dbReference type="PathwayCommons" id="Q6ZSC3"/>
<dbReference type="SignaLink" id="Q6ZSC3"/>
<dbReference type="BioGRID-ORCS" id="375287">
    <property type="hits" value="15 hits in 1150 CRISPR screens"/>
</dbReference>
<dbReference type="GenomeRNAi" id="375287"/>
<dbReference type="Pharos" id="Q6ZSC3">
    <property type="development level" value="Tdark"/>
</dbReference>
<dbReference type="PRO" id="PR:Q6ZSC3"/>
<dbReference type="Proteomes" id="UP000005640">
    <property type="component" value="Chromosome 2"/>
</dbReference>
<dbReference type="RNAct" id="Q6ZSC3">
    <property type="molecule type" value="protein"/>
</dbReference>
<dbReference type="Bgee" id="ENSG00000184898">
    <property type="expression patterns" value="Expressed in oviduct epithelium and 154 other cell types or tissues"/>
</dbReference>
<dbReference type="ExpressionAtlas" id="Q6ZSC3">
    <property type="expression patterns" value="baseline and differential"/>
</dbReference>
<dbReference type="GO" id="GO:0003723">
    <property type="term" value="F:RNA binding"/>
    <property type="evidence" value="ECO:0007669"/>
    <property type="project" value="UniProtKB-KW"/>
</dbReference>
<dbReference type="CDD" id="cd12546">
    <property type="entry name" value="RRM_RBM43"/>
    <property type="match status" value="1"/>
</dbReference>
<dbReference type="Gene3D" id="3.30.70.330">
    <property type="match status" value="1"/>
</dbReference>
<dbReference type="InterPro" id="IPR012677">
    <property type="entry name" value="Nucleotide-bd_a/b_plait_sf"/>
</dbReference>
<dbReference type="InterPro" id="IPR035979">
    <property type="entry name" value="RBD_domain_sf"/>
</dbReference>
<dbReference type="InterPro" id="IPR000504">
    <property type="entry name" value="RRM_dom"/>
</dbReference>
<dbReference type="PANTHER" id="PTHR15225">
    <property type="entry name" value="INTERFERON-INDUCED PROTEIN 35/NMI N-MYC/STAT INTERACTING PROTEIN"/>
    <property type="match status" value="1"/>
</dbReference>
<dbReference type="PANTHER" id="PTHR15225:SF8">
    <property type="entry name" value="RNA-BINDING PROTEIN 43"/>
    <property type="match status" value="1"/>
</dbReference>
<dbReference type="SUPFAM" id="SSF54928">
    <property type="entry name" value="RNA-binding domain, RBD"/>
    <property type="match status" value="1"/>
</dbReference>
<dbReference type="PROSITE" id="PS50102">
    <property type="entry name" value="RRM"/>
    <property type="match status" value="1"/>
</dbReference>
<feature type="chain" id="PRO_0000264247" description="RNA-binding protein 43">
    <location>
        <begin position="1"/>
        <end position="357"/>
    </location>
</feature>
<feature type="domain" description="RRM" evidence="1">
    <location>
        <begin position="15"/>
        <end position="104"/>
    </location>
</feature>
<feature type="sequence variant" id="VAR_033722" description="In dbSNP:rs35749426.">
    <original>I</original>
    <variation>V</variation>
    <location>
        <position position="259"/>
    </location>
</feature>
<comment type="interaction">
    <interactant intactId="EBI-2880658">
        <id>Q6ZSC3</id>
    </interactant>
    <interactant intactId="EBI-724310">
        <id>Q15038</id>
        <label>DAZAP2</label>
    </interactant>
    <organismsDiffer>false</organismsDiffer>
    <experiments>3</experiments>
</comment>
<comment type="interaction">
    <interactant intactId="EBI-2880658">
        <id>Q6ZSC3</id>
    </interactant>
    <interactant intactId="EBI-11522367">
        <id>Q13422-7</id>
        <label>IKZF1</label>
    </interactant>
    <organismsDiffer>false</organismsDiffer>
    <experiments>3</experiments>
</comment>
<sequence length="357" mass="40666">MASVLNVKESKAPERTVVVAGLPVDLFSDQLLAVLVKSHFQDIKNEGGDVEDVIYPTRTKGVAYVIFKEKKVAENVIRQKKHWLARKTRHAELTVSLRVSHFGDKIFSSVNAILDLSVFGKEVTLETLVKDLKKKIPSLSFSPLKPNGRISVEGSFLAVKRLRESLLARACSLLEKDRNFTSEERKWNRQNPQRNLQRSNNSLASVRTLVPETARSGEMLVLDTDVFLYLKHKCGSYESTLKKFHILSQEKVDGEITTICLKSIQVGSQPNNAKHVKELIEEWSHALYLKLRKETFILEGKENREKRMIKRACEQLSSRYLEVLINLYRTHIDIIGSSSDTYLFKKGVMKLIGQKVS</sequence>
<reference key="1">
    <citation type="journal article" date="2004" name="Nat. Genet.">
        <title>Complete sequencing and characterization of 21,243 full-length human cDNAs.</title>
        <authorList>
            <person name="Ota T."/>
            <person name="Suzuki Y."/>
            <person name="Nishikawa T."/>
            <person name="Otsuki T."/>
            <person name="Sugiyama T."/>
            <person name="Irie R."/>
            <person name="Wakamatsu A."/>
            <person name="Hayashi K."/>
            <person name="Sato H."/>
            <person name="Nagai K."/>
            <person name="Kimura K."/>
            <person name="Makita H."/>
            <person name="Sekine M."/>
            <person name="Obayashi M."/>
            <person name="Nishi T."/>
            <person name="Shibahara T."/>
            <person name="Tanaka T."/>
            <person name="Ishii S."/>
            <person name="Yamamoto J."/>
            <person name="Saito K."/>
            <person name="Kawai Y."/>
            <person name="Isono Y."/>
            <person name="Nakamura Y."/>
            <person name="Nagahari K."/>
            <person name="Murakami K."/>
            <person name="Yasuda T."/>
            <person name="Iwayanagi T."/>
            <person name="Wagatsuma M."/>
            <person name="Shiratori A."/>
            <person name="Sudo H."/>
            <person name="Hosoiri T."/>
            <person name="Kaku Y."/>
            <person name="Kodaira H."/>
            <person name="Kondo H."/>
            <person name="Sugawara M."/>
            <person name="Takahashi M."/>
            <person name="Kanda K."/>
            <person name="Yokoi T."/>
            <person name="Furuya T."/>
            <person name="Kikkawa E."/>
            <person name="Omura Y."/>
            <person name="Abe K."/>
            <person name="Kamihara K."/>
            <person name="Katsuta N."/>
            <person name="Sato K."/>
            <person name="Tanikawa M."/>
            <person name="Yamazaki M."/>
            <person name="Ninomiya K."/>
            <person name="Ishibashi T."/>
            <person name="Yamashita H."/>
            <person name="Murakawa K."/>
            <person name="Fujimori K."/>
            <person name="Tanai H."/>
            <person name="Kimata M."/>
            <person name="Watanabe M."/>
            <person name="Hiraoka S."/>
            <person name="Chiba Y."/>
            <person name="Ishida S."/>
            <person name="Ono Y."/>
            <person name="Takiguchi S."/>
            <person name="Watanabe S."/>
            <person name="Yosida M."/>
            <person name="Hotuta T."/>
            <person name="Kusano J."/>
            <person name="Kanehori K."/>
            <person name="Takahashi-Fujii A."/>
            <person name="Hara H."/>
            <person name="Tanase T.-O."/>
            <person name="Nomura Y."/>
            <person name="Togiya S."/>
            <person name="Komai F."/>
            <person name="Hara R."/>
            <person name="Takeuchi K."/>
            <person name="Arita M."/>
            <person name="Imose N."/>
            <person name="Musashino K."/>
            <person name="Yuuki H."/>
            <person name="Oshima A."/>
            <person name="Sasaki N."/>
            <person name="Aotsuka S."/>
            <person name="Yoshikawa Y."/>
            <person name="Matsunawa H."/>
            <person name="Ichihara T."/>
            <person name="Shiohata N."/>
            <person name="Sano S."/>
            <person name="Moriya S."/>
            <person name="Momiyama H."/>
            <person name="Satoh N."/>
            <person name="Takami S."/>
            <person name="Terashima Y."/>
            <person name="Suzuki O."/>
            <person name="Nakagawa S."/>
            <person name="Senoh A."/>
            <person name="Mizoguchi H."/>
            <person name="Goto Y."/>
            <person name="Shimizu F."/>
            <person name="Wakebe H."/>
            <person name="Hishigaki H."/>
            <person name="Watanabe T."/>
            <person name="Sugiyama A."/>
            <person name="Takemoto M."/>
            <person name="Kawakami B."/>
            <person name="Yamazaki M."/>
            <person name="Watanabe K."/>
            <person name="Kumagai A."/>
            <person name="Itakura S."/>
            <person name="Fukuzumi Y."/>
            <person name="Fujimori Y."/>
            <person name="Komiyama M."/>
            <person name="Tashiro H."/>
            <person name="Tanigami A."/>
            <person name="Fujiwara T."/>
            <person name="Ono T."/>
            <person name="Yamada K."/>
            <person name="Fujii Y."/>
            <person name="Ozaki K."/>
            <person name="Hirao M."/>
            <person name="Ohmori Y."/>
            <person name="Kawabata A."/>
            <person name="Hikiji T."/>
            <person name="Kobatake N."/>
            <person name="Inagaki H."/>
            <person name="Ikema Y."/>
            <person name="Okamoto S."/>
            <person name="Okitani R."/>
            <person name="Kawakami T."/>
            <person name="Noguchi S."/>
            <person name="Itoh T."/>
            <person name="Shigeta K."/>
            <person name="Senba T."/>
            <person name="Matsumura K."/>
            <person name="Nakajima Y."/>
            <person name="Mizuno T."/>
            <person name="Morinaga M."/>
            <person name="Sasaki M."/>
            <person name="Togashi T."/>
            <person name="Oyama M."/>
            <person name="Hata H."/>
            <person name="Watanabe M."/>
            <person name="Komatsu T."/>
            <person name="Mizushima-Sugano J."/>
            <person name="Satoh T."/>
            <person name="Shirai Y."/>
            <person name="Takahashi Y."/>
            <person name="Nakagawa K."/>
            <person name="Okumura K."/>
            <person name="Nagase T."/>
            <person name="Nomura N."/>
            <person name="Kikuchi H."/>
            <person name="Masuho Y."/>
            <person name="Yamashita R."/>
            <person name="Nakai K."/>
            <person name="Yada T."/>
            <person name="Nakamura Y."/>
            <person name="Ohara O."/>
            <person name="Isogai T."/>
            <person name="Sugano S."/>
        </authorList>
    </citation>
    <scope>NUCLEOTIDE SEQUENCE [LARGE SCALE MRNA]</scope>
    <source>
        <tissue>Tongue</tissue>
    </source>
</reference>
<reference key="2">
    <citation type="submission" date="2005-09" db="EMBL/GenBank/DDBJ databases">
        <authorList>
            <person name="Mural R.J."/>
            <person name="Istrail S."/>
            <person name="Sutton G.G."/>
            <person name="Florea L."/>
            <person name="Halpern A.L."/>
            <person name="Mobarry C.M."/>
            <person name="Lippert R."/>
            <person name="Walenz B."/>
            <person name="Shatkay H."/>
            <person name="Dew I."/>
            <person name="Miller J.R."/>
            <person name="Flanigan M.J."/>
            <person name="Edwards N.J."/>
            <person name="Bolanos R."/>
            <person name="Fasulo D."/>
            <person name="Halldorsson B.V."/>
            <person name="Hannenhalli S."/>
            <person name="Turner R."/>
            <person name="Yooseph S."/>
            <person name="Lu F."/>
            <person name="Nusskern D.R."/>
            <person name="Shue B.C."/>
            <person name="Zheng X.H."/>
            <person name="Zhong F."/>
            <person name="Delcher A.L."/>
            <person name="Huson D.H."/>
            <person name="Kravitz S.A."/>
            <person name="Mouchard L."/>
            <person name="Reinert K."/>
            <person name="Remington K.A."/>
            <person name="Clark A.G."/>
            <person name="Waterman M.S."/>
            <person name="Eichler E.E."/>
            <person name="Adams M.D."/>
            <person name="Hunkapiller M.W."/>
            <person name="Myers E.W."/>
            <person name="Venter J.C."/>
        </authorList>
    </citation>
    <scope>NUCLEOTIDE SEQUENCE [LARGE SCALE GENOMIC DNA]</scope>
</reference>
<reference key="3">
    <citation type="journal article" date="2004" name="Genome Res.">
        <title>The status, quality, and expansion of the NIH full-length cDNA project: the Mammalian Gene Collection (MGC).</title>
        <authorList>
            <consortium name="The MGC Project Team"/>
        </authorList>
    </citation>
    <scope>NUCLEOTIDE SEQUENCE [LARGE SCALE MRNA]</scope>
</reference>
<keyword id="KW-1267">Proteomics identification</keyword>
<keyword id="KW-1185">Reference proteome</keyword>
<keyword id="KW-0694">RNA-binding</keyword>
<protein>
    <recommendedName>
        <fullName>RNA-binding protein 43</fullName>
    </recommendedName>
    <alternativeName>
        <fullName>RNA-binding motif protein 43</fullName>
    </alternativeName>
</protein>